<comment type="subcellular location">
    <subcellularLocation>
        <location evidence="1">Cell inner membrane</location>
        <topology evidence="1">Multi-pass membrane protein</topology>
    </subcellularLocation>
</comment>
<comment type="similarity">
    <text evidence="3">Belongs to the DedA family.</text>
</comment>
<accession>P0ABP7</accession>
<accession>P09548</accession>
<sequence length="219" mass="24510">MDLIYFLIDFILHIDVHLAELVAEYGVWVYAILFLILFCETGLVVTPFLPGDSLLFVAGALASLETNDLNVHMMVVLMLIAAIVGDAVNYTIGRLFGEKLFSNPNSKIFRRSYLDKTHQFYEKHGGKTIILARFVPIVRTFAPFVAGMGHMSYRHFAAYNVIGALLWVLLFTYAGYFFGTIPMVQDNLKLLIVGIIVVSILPGVIEIIRHKRAAARAAK</sequence>
<keyword id="KW-0997">Cell inner membrane</keyword>
<keyword id="KW-1003">Cell membrane</keyword>
<keyword id="KW-0472">Membrane</keyword>
<keyword id="KW-1185">Reference proteome</keyword>
<keyword id="KW-0812">Transmembrane</keyword>
<keyword id="KW-1133">Transmembrane helix</keyword>
<gene>
    <name type="primary">dedA</name>
    <name type="ordered locus">Z3579</name>
    <name type="ordered locus">ECs3201</name>
</gene>
<name>DEDA_ECO57</name>
<dbReference type="EMBL" id="AE005174">
    <property type="protein sequence ID" value="AAG57446.1"/>
    <property type="molecule type" value="Genomic_DNA"/>
</dbReference>
<dbReference type="EMBL" id="BA000007">
    <property type="protein sequence ID" value="BAB36624.1"/>
    <property type="molecule type" value="Genomic_DNA"/>
</dbReference>
<dbReference type="PIR" id="A98029">
    <property type="entry name" value="A98029"/>
</dbReference>
<dbReference type="RefSeq" id="NP_311228.1">
    <property type="nucleotide sequence ID" value="NC_002695.1"/>
</dbReference>
<dbReference type="RefSeq" id="WP_000364335.1">
    <property type="nucleotide sequence ID" value="NZ_VOAI01000001.1"/>
</dbReference>
<dbReference type="STRING" id="155864.Z3579"/>
<dbReference type="GeneID" id="917121"/>
<dbReference type="KEGG" id="ece:Z3579"/>
<dbReference type="KEGG" id="ecs:ECs_3201"/>
<dbReference type="PATRIC" id="fig|386585.9.peg.3341"/>
<dbReference type="eggNOG" id="COG0586">
    <property type="taxonomic scope" value="Bacteria"/>
</dbReference>
<dbReference type="HOGENOM" id="CLU_044208_6_1_6"/>
<dbReference type="OMA" id="MAANPKY"/>
<dbReference type="Proteomes" id="UP000000558">
    <property type="component" value="Chromosome"/>
</dbReference>
<dbReference type="Proteomes" id="UP000002519">
    <property type="component" value="Chromosome"/>
</dbReference>
<dbReference type="GO" id="GO:0005886">
    <property type="term" value="C:plasma membrane"/>
    <property type="evidence" value="ECO:0007669"/>
    <property type="project" value="UniProtKB-SubCell"/>
</dbReference>
<dbReference type="InterPro" id="IPR032818">
    <property type="entry name" value="DedA-like"/>
</dbReference>
<dbReference type="InterPro" id="IPR032816">
    <property type="entry name" value="VTT_dom"/>
</dbReference>
<dbReference type="NCBIfam" id="NF008102">
    <property type="entry name" value="PRK10847.1"/>
    <property type="match status" value="1"/>
</dbReference>
<dbReference type="PANTHER" id="PTHR30353">
    <property type="entry name" value="INNER MEMBRANE PROTEIN DEDA-RELATED"/>
    <property type="match status" value="1"/>
</dbReference>
<dbReference type="PANTHER" id="PTHR30353:SF0">
    <property type="entry name" value="TRANSMEMBRANE PROTEIN"/>
    <property type="match status" value="1"/>
</dbReference>
<dbReference type="Pfam" id="PF09335">
    <property type="entry name" value="VTT_dom"/>
    <property type="match status" value="1"/>
</dbReference>
<proteinExistence type="inferred from homology"/>
<protein>
    <recommendedName>
        <fullName>Protein DedA</fullName>
    </recommendedName>
    <alternativeName>
        <fullName>Protein DSG-1</fullName>
    </alternativeName>
</protein>
<organism>
    <name type="scientific">Escherichia coli O157:H7</name>
    <dbReference type="NCBI Taxonomy" id="83334"/>
    <lineage>
        <taxon>Bacteria</taxon>
        <taxon>Pseudomonadati</taxon>
        <taxon>Pseudomonadota</taxon>
        <taxon>Gammaproteobacteria</taxon>
        <taxon>Enterobacterales</taxon>
        <taxon>Enterobacteriaceae</taxon>
        <taxon>Escherichia</taxon>
    </lineage>
</organism>
<feature type="chain" id="PRO_0000161407" description="Protein DedA">
    <location>
        <begin position="1"/>
        <end position="219"/>
    </location>
</feature>
<feature type="topological domain" description="Periplasmic" evidence="2">
    <location>
        <begin position="1"/>
        <end position="24"/>
    </location>
</feature>
<feature type="transmembrane region" description="Helical" evidence="2">
    <location>
        <begin position="25"/>
        <end position="45"/>
    </location>
</feature>
<feature type="transmembrane region" description="Helical" evidence="2">
    <location>
        <begin position="46"/>
        <end position="66"/>
    </location>
</feature>
<feature type="topological domain" description="Periplasmic" evidence="2">
    <location>
        <begin position="67"/>
        <end position="72"/>
    </location>
</feature>
<feature type="transmembrane region" description="Helical" evidence="2">
    <location>
        <begin position="73"/>
        <end position="93"/>
    </location>
</feature>
<feature type="topological domain" description="Cytoplasmic" evidence="2">
    <location>
        <begin position="94"/>
        <end position="160"/>
    </location>
</feature>
<feature type="transmembrane region" description="Helical" evidence="2">
    <location>
        <begin position="161"/>
        <end position="181"/>
    </location>
</feature>
<feature type="topological domain" description="Periplasmic" evidence="2">
    <location>
        <begin position="182"/>
        <end position="187"/>
    </location>
</feature>
<feature type="transmembrane region" description="Helical" evidence="2">
    <location>
        <begin position="188"/>
        <end position="208"/>
    </location>
</feature>
<feature type="topological domain" description="Cytoplasmic" evidence="2">
    <location>
        <begin position="209"/>
        <end position="219"/>
    </location>
</feature>
<evidence type="ECO:0000250" key="1"/>
<evidence type="ECO:0000255" key="2"/>
<evidence type="ECO:0000305" key="3"/>
<reference key="1">
    <citation type="journal article" date="2001" name="Nature">
        <title>Genome sequence of enterohaemorrhagic Escherichia coli O157:H7.</title>
        <authorList>
            <person name="Perna N.T."/>
            <person name="Plunkett G. III"/>
            <person name="Burland V."/>
            <person name="Mau B."/>
            <person name="Glasner J.D."/>
            <person name="Rose D.J."/>
            <person name="Mayhew G.F."/>
            <person name="Evans P.S."/>
            <person name="Gregor J."/>
            <person name="Kirkpatrick H.A."/>
            <person name="Posfai G."/>
            <person name="Hackett J."/>
            <person name="Klink S."/>
            <person name="Boutin A."/>
            <person name="Shao Y."/>
            <person name="Miller L."/>
            <person name="Grotbeck E.J."/>
            <person name="Davis N.W."/>
            <person name="Lim A."/>
            <person name="Dimalanta E.T."/>
            <person name="Potamousis K."/>
            <person name="Apodaca J."/>
            <person name="Anantharaman T.S."/>
            <person name="Lin J."/>
            <person name="Yen G."/>
            <person name="Schwartz D.C."/>
            <person name="Welch R.A."/>
            <person name="Blattner F.R."/>
        </authorList>
    </citation>
    <scope>NUCLEOTIDE SEQUENCE [LARGE SCALE GENOMIC DNA]</scope>
    <source>
        <strain>O157:H7 / EDL933 / ATCC 700927 / EHEC</strain>
    </source>
</reference>
<reference key="2">
    <citation type="journal article" date="2001" name="DNA Res.">
        <title>Complete genome sequence of enterohemorrhagic Escherichia coli O157:H7 and genomic comparison with a laboratory strain K-12.</title>
        <authorList>
            <person name="Hayashi T."/>
            <person name="Makino K."/>
            <person name="Ohnishi M."/>
            <person name="Kurokawa K."/>
            <person name="Ishii K."/>
            <person name="Yokoyama K."/>
            <person name="Han C.-G."/>
            <person name="Ohtsubo E."/>
            <person name="Nakayama K."/>
            <person name="Murata T."/>
            <person name="Tanaka M."/>
            <person name="Tobe T."/>
            <person name="Iida T."/>
            <person name="Takami H."/>
            <person name="Honda T."/>
            <person name="Sasakawa C."/>
            <person name="Ogasawara N."/>
            <person name="Yasunaga T."/>
            <person name="Kuhara S."/>
            <person name="Shiba T."/>
            <person name="Hattori M."/>
            <person name="Shinagawa H."/>
        </authorList>
    </citation>
    <scope>NUCLEOTIDE SEQUENCE [LARGE SCALE GENOMIC DNA]</scope>
    <source>
        <strain>O157:H7 / Sakai / RIMD 0509952 / EHEC</strain>
    </source>
</reference>